<feature type="signal peptide" evidence="2">
    <location>
        <begin position="1"/>
        <end position="23"/>
    </location>
</feature>
<feature type="chain" id="PRO_0000353814" description="Putative cell-type specific agglutination protein pfl7">
    <location>
        <begin position="24"/>
        <end position="358"/>
    </location>
</feature>
<feature type="repeat" description="1" evidence="10">
    <location>
        <begin position="148"/>
        <end position="180"/>
    </location>
</feature>
<feature type="repeat" description="2" evidence="10">
    <location>
        <begin position="181"/>
        <end position="218"/>
    </location>
</feature>
<feature type="domain" description="DIPSY" evidence="4">
    <location>
        <begin position="207"/>
        <end position="358"/>
    </location>
</feature>
<feature type="region of interest" description="Disordered" evidence="5">
    <location>
        <begin position="90"/>
        <end position="144"/>
    </location>
</feature>
<feature type="region of interest" description="2 X 36 AA approximate tandem repeats" evidence="10">
    <location>
        <begin position="148"/>
        <end position="218"/>
    </location>
</feature>
<feature type="glycosylation site" description="N-linked (GlcNAc...) asparagine" evidence="3">
    <location>
        <position position="67"/>
    </location>
</feature>
<feature type="glycosylation site" description="N-linked (GlcNAc...) asparagine" evidence="3">
    <location>
        <position position="88"/>
    </location>
</feature>
<feature type="glycosylation site" description="N-linked (GlcNAc...) asparagine" evidence="3">
    <location>
        <position position="112"/>
    </location>
</feature>
<feature type="glycosylation site" description="N-linked (GlcNAc...) asparagine" evidence="3">
    <location>
        <position position="136"/>
    </location>
</feature>
<feature type="glycosylation site" description="N-linked (GlcNAc...) asparagine" evidence="3">
    <location>
        <position position="245"/>
    </location>
</feature>
<feature type="glycosylation site" description="N-linked (GlcNAc...) asparagine" evidence="3">
    <location>
        <position position="305"/>
    </location>
</feature>
<organism>
    <name type="scientific">Schizosaccharomyces pombe (strain 972 / ATCC 24843)</name>
    <name type="common">Fission yeast</name>
    <dbReference type="NCBI Taxonomy" id="284812"/>
    <lineage>
        <taxon>Eukaryota</taxon>
        <taxon>Fungi</taxon>
        <taxon>Dikarya</taxon>
        <taxon>Ascomycota</taxon>
        <taxon>Taphrinomycotina</taxon>
        <taxon>Schizosaccharomycetes</taxon>
        <taxon>Schizosaccharomycetales</taxon>
        <taxon>Schizosaccharomycetaceae</taxon>
        <taxon>Schizosaccharomyces</taxon>
    </lineage>
</organism>
<keyword id="KW-0325">Glycoprotein</keyword>
<keyword id="KW-1185">Reference proteome</keyword>
<keyword id="KW-0677">Repeat</keyword>
<keyword id="KW-0732">Signal</keyword>
<proteinExistence type="inferred from homology"/>
<protein>
    <recommendedName>
        <fullName evidence="9">Putative cell-type specific agglutination protein pfl7</fullName>
    </recommendedName>
    <alternativeName>
        <fullName evidence="7">Adhesin pfl7</fullName>
    </alternativeName>
    <alternativeName>
        <fullName evidence="8">Pombe flocculin 7</fullName>
    </alternativeName>
</protein>
<gene>
    <name evidence="8" type="primary">pfl7</name>
    <name evidence="11" type="ORF">SPBC359.04c</name>
</gene>
<dbReference type="EMBL" id="CU329671">
    <property type="protein sequence ID" value="CAB91573.1"/>
    <property type="molecule type" value="Genomic_DNA"/>
</dbReference>
<dbReference type="RefSeq" id="NP_595054.1">
    <property type="nucleotide sequence ID" value="NM_001020960.2"/>
</dbReference>
<dbReference type="BioGRID" id="277451">
    <property type="interactions" value="14"/>
</dbReference>
<dbReference type="STRING" id="284812.Q9P5N1"/>
<dbReference type="GlyCosmos" id="Q9P5N1">
    <property type="glycosylation" value="6 sites, No reported glycans"/>
</dbReference>
<dbReference type="iPTMnet" id="Q9P5N1"/>
<dbReference type="PaxDb" id="4896-SPBC359.04c.1"/>
<dbReference type="EnsemblFungi" id="SPBC359.04c.1">
    <property type="protein sequence ID" value="SPBC359.04c.1:pep"/>
    <property type="gene ID" value="SPBC359.04c"/>
</dbReference>
<dbReference type="PomBase" id="SPBC359.04c">
    <property type="gene designation" value="pfl7"/>
</dbReference>
<dbReference type="VEuPathDB" id="FungiDB:SPBC359.04c"/>
<dbReference type="HOGENOM" id="CLU_774238_0_0_1"/>
<dbReference type="InParanoid" id="Q9P5N1"/>
<dbReference type="PRO" id="PR:Q9P5N1"/>
<dbReference type="Proteomes" id="UP000002485">
    <property type="component" value="Chromosome II"/>
</dbReference>
<dbReference type="GO" id="GO:0010339">
    <property type="term" value="C:external side of cell wall"/>
    <property type="evidence" value="ECO:0000304"/>
    <property type="project" value="PomBase"/>
</dbReference>
<dbReference type="GO" id="GO:0000128">
    <property type="term" value="P:flocculation"/>
    <property type="evidence" value="ECO:0000315"/>
    <property type="project" value="PomBase"/>
</dbReference>
<dbReference type="InterPro" id="IPR021746">
    <property type="entry name" value="DIPSY"/>
</dbReference>
<dbReference type="InterPro" id="IPR051905">
    <property type="entry name" value="S_pombe_Mam3/Map4"/>
</dbReference>
<dbReference type="PANTHER" id="PTHR31492">
    <property type="entry name" value="M CELL-TYPE AGGLUTINATION PROTEIN MAM3-RELATED"/>
    <property type="match status" value="1"/>
</dbReference>
<dbReference type="PANTHER" id="PTHR31492:SF14">
    <property type="entry name" value="M CELL-TYPE AGGLUTINATION PROTEIN MAM3-RELATED"/>
    <property type="match status" value="1"/>
</dbReference>
<dbReference type="Pfam" id="PF11763">
    <property type="entry name" value="DIPSY"/>
    <property type="match status" value="1"/>
</dbReference>
<dbReference type="PROSITE" id="PS51825">
    <property type="entry name" value="DIPSY"/>
    <property type="match status" value="1"/>
</dbReference>
<name>PFL7_SCHPO</name>
<evidence type="ECO:0000250" key="1">
    <source>
        <dbReference type="UniProtKB" id="O74346"/>
    </source>
</evidence>
<evidence type="ECO:0000255" key="2"/>
<evidence type="ECO:0000255" key="3">
    <source>
        <dbReference type="PROSITE-ProRule" id="PRU00498"/>
    </source>
</evidence>
<evidence type="ECO:0000255" key="4">
    <source>
        <dbReference type="PROSITE-ProRule" id="PRU01169"/>
    </source>
</evidence>
<evidence type="ECO:0000256" key="5">
    <source>
        <dbReference type="SAM" id="MobiDB-lite"/>
    </source>
</evidence>
<evidence type="ECO:0000269" key="6">
    <source>
    </source>
</evidence>
<evidence type="ECO:0000303" key="7">
    <source>
    </source>
</evidence>
<evidence type="ECO:0000303" key="8">
    <source>
    </source>
</evidence>
<evidence type="ECO:0000305" key="9"/>
<evidence type="ECO:0000305" key="10">
    <source>
    </source>
</evidence>
<evidence type="ECO:0000312" key="11">
    <source>
        <dbReference type="PomBase" id="SPBC359.04c"/>
    </source>
</evidence>
<comment type="function">
    <text evidence="1 6">May be involved in agglutination during conjugation or other aspects of colony formation (By similarity). Induces flocculation when overexpressed (PubMed:23236291).</text>
</comment>
<comment type="subcellular location">
    <subcellularLocation>
        <location evidence="9">Cell surface</location>
    </subcellularLocation>
</comment>
<comment type="similarity">
    <text evidence="4">Belongs to the mam3/map4 family.</text>
</comment>
<accession>Q9P5N1</accession>
<reference key="1">
    <citation type="journal article" date="2002" name="Nature">
        <title>The genome sequence of Schizosaccharomyces pombe.</title>
        <authorList>
            <person name="Wood V."/>
            <person name="Gwilliam R."/>
            <person name="Rajandream M.A."/>
            <person name="Lyne M.H."/>
            <person name="Lyne R."/>
            <person name="Stewart A."/>
            <person name="Sgouros J.G."/>
            <person name="Peat N."/>
            <person name="Hayles J."/>
            <person name="Baker S.G."/>
            <person name="Basham D."/>
            <person name="Bowman S."/>
            <person name="Brooks K."/>
            <person name="Brown D."/>
            <person name="Brown S."/>
            <person name="Chillingworth T."/>
            <person name="Churcher C.M."/>
            <person name="Collins M."/>
            <person name="Connor R."/>
            <person name="Cronin A."/>
            <person name="Davis P."/>
            <person name="Feltwell T."/>
            <person name="Fraser A."/>
            <person name="Gentles S."/>
            <person name="Goble A."/>
            <person name="Hamlin N."/>
            <person name="Harris D.E."/>
            <person name="Hidalgo J."/>
            <person name="Hodgson G."/>
            <person name="Holroyd S."/>
            <person name="Hornsby T."/>
            <person name="Howarth S."/>
            <person name="Huckle E.J."/>
            <person name="Hunt S."/>
            <person name="Jagels K."/>
            <person name="James K.D."/>
            <person name="Jones L."/>
            <person name="Jones M."/>
            <person name="Leather S."/>
            <person name="McDonald S."/>
            <person name="McLean J."/>
            <person name="Mooney P."/>
            <person name="Moule S."/>
            <person name="Mungall K.L."/>
            <person name="Murphy L.D."/>
            <person name="Niblett D."/>
            <person name="Odell C."/>
            <person name="Oliver K."/>
            <person name="O'Neil S."/>
            <person name="Pearson D."/>
            <person name="Quail M.A."/>
            <person name="Rabbinowitsch E."/>
            <person name="Rutherford K.M."/>
            <person name="Rutter S."/>
            <person name="Saunders D."/>
            <person name="Seeger K."/>
            <person name="Sharp S."/>
            <person name="Skelton J."/>
            <person name="Simmonds M.N."/>
            <person name="Squares R."/>
            <person name="Squares S."/>
            <person name="Stevens K."/>
            <person name="Taylor K."/>
            <person name="Taylor R.G."/>
            <person name="Tivey A."/>
            <person name="Walsh S.V."/>
            <person name="Warren T."/>
            <person name="Whitehead S."/>
            <person name="Woodward J.R."/>
            <person name="Volckaert G."/>
            <person name="Aert R."/>
            <person name="Robben J."/>
            <person name="Grymonprez B."/>
            <person name="Weltjens I."/>
            <person name="Vanstreels E."/>
            <person name="Rieger M."/>
            <person name="Schaefer M."/>
            <person name="Mueller-Auer S."/>
            <person name="Gabel C."/>
            <person name="Fuchs M."/>
            <person name="Duesterhoeft A."/>
            <person name="Fritzc C."/>
            <person name="Holzer E."/>
            <person name="Moestl D."/>
            <person name="Hilbert H."/>
            <person name="Borzym K."/>
            <person name="Langer I."/>
            <person name="Beck A."/>
            <person name="Lehrach H."/>
            <person name="Reinhardt R."/>
            <person name="Pohl T.M."/>
            <person name="Eger P."/>
            <person name="Zimmermann W."/>
            <person name="Wedler H."/>
            <person name="Wambutt R."/>
            <person name="Purnelle B."/>
            <person name="Goffeau A."/>
            <person name="Cadieu E."/>
            <person name="Dreano S."/>
            <person name="Gloux S."/>
            <person name="Lelaure V."/>
            <person name="Mottier S."/>
            <person name="Galibert F."/>
            <person name="Aves S.J."/>
            <person name="Xiang Z."/>
            <person name="Hunt C."/>
            <person name="Moore K."/>
            <person name="Hurst S.M."/>
            <person name="Lucas M."/>
            <person name="Rochet M."/>
            <person name="Gaillardin C."/>
            <person name="Tallada V.A."/>
            <person name="Garzon A."/>
            <person name="Thode G."/>
            <person name="Daga R.R."/>
            <person name="Cruzado L."/>
            <person name="Jimenez J."/>
            <person name="Sanchez M."/>
            <person name="del Rey F."/>
            <person name="Benito J."/>
            <person name="Dominguez A."/>
            <person name="Revuelta J.L."/>
            <person name="Moreno S."/>
            <person name="Armstrong J."/>
            <person name="Forsburg S.L."/>
            <person name="Cerutti L."/>
            <person name="Lowe T."/>
            <person name="McCombie W.R."/>
            <person name="Paulsen I."/>
            <person name="Potashkin J."/>
            <person name="Shpakovski G.V."/>
            <person name="Ussery D."/>
            <person name="Barrell B.G."/>
            <person name="Nurse P."/>
        </authorList>
    </citation>
    <scope>NUCLEOTIDE SEQUENCE [LARGE SCALE GENOMIC DNA]</scope>
    <source>
        <strain>972 / ATCC 24843</strain>
    </source>
</reference>
<reference key="2">
    <citation type="journal article" date="2008" name="Fungal Genet. Biol.">
        <title>Molecular phylogenetics of ascomycotal adhesins--a novel family of putative cell-surface adhesive proteins in fission yeasts.</title>
        <authorList>
            <person name="Linder T."/>
            <person name="Gustafsson C.M."/>
        </authorList>
    </citation>
    <scope>DOMAIN</scope>
    <scope>REPEATS</scope>
</reference>
<reference key="3">
    <citation type="journal article" date="2012" name="PLoS Genet.">
        <title>Deciphering the transcriptional-regulatory network of flocculation in Schizosaccharomyces pombe.</title>
        <authorList>
            <person name="Kwon E.J."/>
            <person name="Laderoute A."/>
            <person name="Chatfield-Reed K."/>
            <person name="Vachon L."/>
            <person name="Karagiannis J."/>
            <person name="Chua G."/>
        </authorList>
    </citation>
    <scope>FUNCTION</scope>
</reference>
<sequence length="358" mass="37952">MNSLKSLCLKCIVTLCLLVNAFAFDYASLQEQDENLLAACPQYITIYTNGPVPGTTTIYPTSNVASNTSENYPYTGSKSLSSSSILSNSTISTSSSTPITASVPTSSSILSNSTIPTTSPVPTTSSTPTSSSILSNSTIPSSSSISASTITTTIISGSTQFTTTFVDQSIDTVEVVIPTAGYITTTLTSGSSYPVSTTTLQTVSGTQSGLVEVITPSCGCNPENSFHLRLVGDSINPSYVYKNTNVSDPDEGNMYTSTEGNTEAVNVFYYDPTVERILTCDCVRPVYTIYTDDPDSSFDIIKNNNGTFTFVESSSGEIQTLHVSQYGALWITSPEYDGETGGMDDVGFRADDVILVAY</sequence>